<accession>A0A7H0DN26</accession>
<protein>
    <recommendedName>
        <fullName>EFC-associated protein OPG053</fullName>
    </recommendedName>
</protein>
<dbReference type="EMBL" id="MT903340">
    <property type="protein sequence ID" value="QNP12909.1"/>
    <property type="molecule type" value="Genomic_DNA"/>
</dbReference>
<dbReference type="RefSeq" id="NP_536468.1">
    <property type="nucleotide sequence ID" value="NC_003310.1"/>
</dbReference>
<dbReference type="RefSeq" id="YP_010377036.1">
    <property type="nucleotide sequence ID" value="NC_063383.1"/>
</dbReference>
<dbReference type="SMR" id="A0A7H0DN26"/>
<dbReference type="GeneID" id="72551449"/>
<dbReference type="GeneID" id="928949"/>
<dbReference type="KEGG" id="vg:928949"/>
<dbReference type="Proteomes" id="UP000516359">
    <property type="component" value="Genome"/>
</dbReference>
<dbReference type="GO" id="GO:0016020">
    <property type="term" value="C:membrane"/>
    <property type="evidence" value="ECO:0007669"/>
    <property type="project" value="UniProtKB-KW"/>
</dbReference>
<dbReference type="GO" id="GO:0019031">
    <property type="term" value="C:viral envelope"/>
    <property type="evidence" value="ECO:0007669"/>
    <property type="project" value="UniProtKB-KW"/>
</dbReference>
<dbReference type="GO" id="GO:0055036">
    <property type="term" value="C:virion membrane"/>
    <property type="evidence" value="ECO:0007669"/>
    <property type="project" value="UniProtKB-SubCell"/>
</dbReference>
<dbReference type="InterPro" id="IPR003472">
    <property type="entry name" value="Virion_mem_poxvirus_L1"/>
</dbReference>
<dbReference type="Pfam" id="PF02442">
    <property type="entry name" value="L1R_F9L"/>
    <property type="match status" value="1"/>
</dbReference>
<proteinExistence type="inferred from homology"/>
<organism>
    <name type="scientific">Monkeypox virus</name>
    <dbReference type="NCBI Taxonomy" id="10244"/>
    <lineage>
        <taxon>Viruses</taxon>
        <taxon>Varidnaviria</taxon>
        <taxon>Bamfordvirae</taxon>
        <taxon>Nucleocytoviricota</taxon>
        <taxon>Pokkesviricetes</taxon>
        <taxon>Chitovirales</taxon>
        <taxon>Poxviridae</taxon>
        <taxon>Chordopoxvirinae</taxon>
        <taxon>Orthopoxvirus</taxon>
    </lineage>
</organism>
<sequence>MAETKEFKTLYNLFIDSYLQKLAQHSIPTNVTCAIHIGEVIGQFKNCALRITNKCMSNSRLSFTLMVESFIEVISLLPEKDRRAIAEEIGIDLDDVPSVVSKLEKNCNAYAEVNNIIDIQKLNIGECSAPPGQHMLLQIVNTGSAEANCGLQTIVKSLNKIYVPPIIENRLPYYDPWFLVGVAIILVIFTVAICSIRRNLALKYRYGTFLYV</sequence>
<gene>
    <name type="primary">OPG053</name>
    <name type="ORF">MPXVgp041</name>
</gene>
<organismHost>
    <name type="scientific">Cynomys gunnisoni</name>
    <name type="common">Gunnison's prairie dog</name>
    <name type="synonym">Spermophilus gunnisoni</name>
    <dbReference type="NCBI Taxonomy" id="45479"/>
</organismHost>
<organismHost>
    <name type="scientific">Cynomys leucurus</name>
    <name type="common">White-tailed prairie dog</name>
    <dbReference type="NCBI Taxonomy" id="99825"/>
</organismHost>
<organismHost>
    <name type="scientific">Cynomys ludovicianus</name>
    <name type="common">Black-tailed prairie dog</name>
    <dbReference type="NCBI Taxonomy" id="45480"/>
</organismHost>
<organismHost>
    <name type="scientific">Cynomys mexicanus</name>
    <name type="common">Mexican prairie dog</name>
    <dbReference type="NCBI Taxonomy" id="99826"/>
</organismHost>
<organismHost>
    <name type="scientific">Cynomys parvidens</name>
    <name type="common">Utah prairie dog</name>
    <dbReference type="NCBI Taxonomy" id="99827"/>
</organismHost>
<organismHost>
    <name type="scientific">Gliridae</name>
    <name type="common">dormice</name>
    <dbReference type="NCBI Taxonomy" id="30650"/>
</organismHost>
<organismHost>
    <name type="scientific">Heliosciurus ruwenzorii</name>
    <name type="common">Ruwenzori sun squirrel</name>
    <dbReference type="NCBI Taxonomy" id="226685"/>
</organismHost>
<organismHost>
    <name type="scientific">Homo sapiens</name>
    <name type="common">Human</name>
    <dbReference type="NCBI Taxonomy" id="9606"/>
</organismHost>
<organismHost>
    <name type="scientific">Mus musculus</name>
    <name type="common">Mouse</name>
    <dbReference type="NCBI Taxonomy" id="10090"/>
</organismHost>
<comment type="function">
    <text evidence="1">Component of the entry fusion complex (EFC), which consists of 11 proteins. During cell infection, this complex mediates entry of the virion core into the host cytoplasm by a two-step mechanism consisting of lipid mixing of the viral and cellular membranes and subsequent pore formation.</text>
</comment>
<comment type="subunit">
    <text evidence="1">Component of the entry fusion complex (EFC) composed of OPG053, OPG076, OPG086, OPG094, OPG095, OPG099, OPG107, OPG143, OPG104, OPG147 and OPG155. Except for OPG095 and OPG052, each of the EFC proteins is required for assembly or stability of the complex.</text>
</comment>
<comment type="subcellular location">
    <subcellularLocation>
        <location evidence="1">Virion membrane</location>
        <topology evidence="1">Single-pass membrane protein</topology>
    </subcellularLocation>
    <text evidence="1">Component of the mature virion (MV) membrane.</text>
</comment>
<comment type="PTM">
    <text evidence="1">Disulfid bonds are oxidized in the cytoplasm by OPG088 protein.</text>
</comment>
<comment type="PTM">
    <text evidence="1">Unglycosylated because produced in viral factories instead of the classic ER -Golgi route.</text>
</comment>
<comment type="similarity">
    <text evidence="3">Belongs to the orthopoxvirus OPG053 family.</text>
</comment>
<feature type="chain" id="PRO_0000457641" description="EFC-associated protein OPG053">
    <location>
        <begin position="1"/>
        <end position="212"/>
    </location>
</feature>
<feature type="topological domain" description="Virion surface" evidence="2">
    <location>
        <begin position="1"/>
        <end position="175"/>
    </location>
</feature>
<feature type="transmembrane region" description="Helical" evidence="2">
    <location>
        <begin position="176"/>
        <end position="196"/>
    </location>
</feature>
<feature type="topological domain" description="Intravirion" evidence="2">
    <location>
        <begin position="197"/>
        <end position="212"/>
    </location>
</feature>
<feature type="disulfide bond" description="by OPG088" evidence="1">
    <location>
        <begin position="33"/>
        <end position="55"/>
    </location>
</feature>
<feature type="disulfide bond" description="by OPG088" evidence="1">
    <location>
        <begin position="47"/>
        <end position="127"/>
    </location>
</feature>
<feature type="disulfide bond" description="by OPG088" evidence="1">
    <location>
        <begin position="107"/>
        <end position="149"/>
    </location>
</feature>
<evidence type="ECO:0000250" key="1">
    <source>
        <dbReference type="UniProtKB" id="P24361"/>
    </source>
</evidence>
<evidence type="ECO:0000255" key="2"/>
<evidence type="ECO:0000305" key="3"/>
<reference key="1">
    <citation type="journal article" date="2022" name="J. Infect. Dis.">
        <title>Exportation of Monkeypox virus from the African continent.</title>
        <authorList>
            <person name="Mauldin M.R."/>
            <person name="McCollum A.M."/>
            <person name="Nakazawa Y.J."/>
            <person name="Mandra A."/>
            <person name="Whitehouse E.R."/>
            <person name="Davidson W."/>
            <person name="Zhao H."/>
            <person name="Gao J."/>
            <person name="Li Y."/>
            <person name="Doty J."/>
            <person name="Yinka-Ogunleye A."/>
            <person name="Akinpelu A."/>
            <person name="Aruna O."/>
            <person name="Naidoo D."/>
            <person name="Lewandowski K."/>
            <person name="Afrough B."/>
            <person name="Graham V."/>
            <person name="Aarons E."/>
            <person name="Hewson R."/>
            <person name="Vipond R."/>
            <person name="Dunning J."/>
            <person name="Chand M."/>
            <person name="Brown C."/>
            <person name="Cohen-Gihon I."/>
            <person name="Erez N."/>
            <person name="Shifman O."/>
            <person name="Israeli O."/>
            <person name="Sharon M."/>
            <person name="Schwartz E."/>
            <person name="Beth-Din A."/>
            <person name="Zvi A."/>
            <person name="Mak T.M."/>
            <person name="Ng Y.K."/>
            <person name="Cui L."/>
            <person name="Lin R.T.P."/>
            <person name="Olson V.A."/>
            <person name="Brooks T."/>
            <person name="Paran N."/>
            <person name="Ihekweazu C."/>
            <person name="Reynolds M.G."/>
        </authorList>
    </citation>
    <scope>NUCLEOTIDE SEQUENCE [LARGE SCALE GENOMIC DNA]</scope>
    <source>
        <strain>MPXV-M5312_HM12_Rivers</strain>
    </source>
</reference>
<keyword id="KW-1015">Disulfide bond</keyword>
<keyword id="KW-0426">Late protein</keyword>
<keyword id="KW-0472">Membrane</keyword>
<keyword id="KW-1185">Reference proteome</keyword>
<keyword id="KW-0812">Transmembrane</keyword>
<keyword id="KW-1133">Transmembrane helix</keyword>
<keyword id="KW-0261">Viral envelope protein</keyword>
<keyword id="KW-0946">Virion</keyword>
<name>PG053_MONPV</name>